<accession>A6QLU8</accession>
<organism>
    <name type="scientific">Bos taurus</name>
    <name type="common">Bovine</name>
    <dbReference type="NCBI Taxonomy" id="9913"/>
    <lineage>
        <taxon>Eukaryota</taxon>
        <taxon>Metazoa</taxon>
        <taxon>Chordata</taxon>
        <taxon>Craniata</taxon>
        <taxon>Vertebrata</taxon>
        <taxon>Euteleostomi</taxon>
        <taxon>Mammalia</taxon>
        <taxon>Eutheria</taxon>
        <taxon>Laurasiatheria</taxon>
        <taxon>Artiodactyla</taxon>
        <taxon>Ruminantia</taxon>
        <taxon>Pecora</taxon>
        <taxon>Bovidae</taxon>
        <taxon>Bovinae</taxon>
        <taxon>Bos</taxon>
    </lineage>
</organism>
<gene>
    <name type="primary">NXN</name>
</gene>
<evidence type="ECO:0000250" key="1"/>
<evidence type="ECO:0000250" key="2">
    <source>
        <dbReference type="UniProtKB" id="P97346"/>
    </source>
</evidence>
<evidence type="ECO:0000250" key="3">
    <source>
        <dbReference type="UniProtKB" id="Q6DKJ4"/>
    </source>
</evidence>
<evidence type="ECO:0000255" key="4">
    <source>
        <dbReference type="PROSITE-ProRule" id="PRU00691"/>
    </source>
</evidence>
<evidence type="ECO:0000305" key="5"/>
<name>NXN_BOVIN</name>
<reference key="1">
    <citation type="submission" date="2007-06" db="EMBL/GenBank/DDBJ databases">
        <authorList>
            <consortium name="NIH - Mammalian Gene Collection (MGC) project"/>
        </authorList>
    </citation>
    <scope>NUCLEOTIDE SEQUENCE [LARGE SCALE MRNA]</scope>
    <source>
        <strain>Hereford</strain>
        <tissue>Fetal skin</tissue>
    </source>
</reference>
<protein>
    <recommendedName>
        <fullName>Nucleoredoxin</fullName>
        <ecNumber>1.8.1.8</ecNumber>
    </recommendedName>
</protein>
<dbReference type="EC" id="1.8.1.8"/>
<dbReference type="EMBL" id="BC148092">
    <property type="protein sequence ID" value="AAI48093.1"/>
    <property type="molecule type" value="mRNA"/>
</dbReference>
<dbReference type="RefSeq" id="NP_001095606.1">
    <property type="nucleotide sequence ID" value="NM_001102136.1"/>
</dbReference>
<dbReference type="FunCoup" id="A6QLU8">
    <property type="interactions" value="479"/>
</dbReference>
<dbReference type="STRING" id="9913.ENSBTAP00000001140"/>
<dbReference type="PaxDb" id="9913-ENSBTAP00000001140"/>
<dbReference type="Ensembl" id="ENSBTAT00000001140.7">
    <property type="protein sequence ID" value="ENSBTAP00000001140.5"/>
    <property type="gene ID" value="ENSBTAG00000000855.7"/>
</dbReference>
<dbReference type="GeneID" id="531367"/>
<dbReference type="KEGG" id="bta:531367"/>
<dbReference type="CTD" id="64359"/>
<dbReference type="VEuPathDB" id="HostDB:ENSBTAG00000000855"/>
<dbReference type="VGNC" id="VGNC:32376">
    <property type="gene designation" value="NXN"/>
</dbReference>
<dbReference type="eggNOG" id="KOG2501">
    <property type="taxonomic scope" value="Eukaryota"/>
</dbReference>
<dbReference type="GeneTree" id="ENSGT00940000161894"/>
<dbReference type="HOGENOM" id="CLU_019626_2_1_1"/>
<dbReference type="InParanoid" id="A6QLU8"/>
<dbReference type="OMA" id="NAPCRQF"/>
<dbReference type="OrthoDB" id="9440957at2759"/>
<dbReference type="TreeFam" id="TF331873"/>
<dbReference type="Proteomes" id="UP000009136">
    <property type="component" value="Chromosome 19"/>
</dbReference>
<dbReference type="Bgee" id="ENSBTAG00000000855">
    <property type="expression patterns" value="Expressed in vas deferens and 103 other cell types or tissues"/>
</dbReference>
<dbReference type="GO" id="GO:0005829">
    <property type="term" value="C:cytosol"/>
    <property type="evidence" value="ECO:0007669"/>
    <property type="project" value="UniProtKB-SubCell"/>
</dbReference>
<dbReference type="GO" id="GO:0005634">
    <property type="term" value="C:nucleus"/>
    <property type="evidence" value="ECO:0000318"/>
    <property type="project" value="GO_Central"/>
</dbReference>
<dbReference type="GO" id="GO:0004791">
    <property type="term" value="F:thioredoxin-disulfide reductase (NADPH) activity"/>
    <property type="evidence" value="ECO:0000318"/>
    <property type="project" value="GO_Central"/>
</dbReference>
<dbReference type="GO" id="GO:0030154">
    <property type="term" value="P:cell differentiation"/>
    <property type="evidence" value="ECO:0007669"/>
    <property type="project" value="UniProtKB-KW"/>
</dbReference>
<dbReference type="GO" id="GO:0072359">
    <property type="term" value="P:circulatory system development"/>
    <property type="evidence" value="ECO:0000250"/>
    <property type="project" value="UniProtKB"/>
</dbReference>
<dbReference type="GO" id="GO:0001701">
    <property type="term" value="P:in utero embryonic development"/>
    <property type="evidence" value="ECO:0007669"/>
    <property type="project" value="Ensembl"/>
</dbReference>
<dbReference type="GO" id="GO:0031397">
    <property type="term" value="P:negative regulation of protein ubiquitination"/>
    <property type="evidence" value="ECO:0000250"/>
    <property type="project" value="UniProtKB"/>
</dbReference>
<dbReference type="GO" id="GO:0030178">
    <property type="term" value="P:negative regulation of Wnt signaling pathway"/>
    <property type="evidence" value="ECO:0000250"/>
    <property type="project" value="UniProtKB"/>
</dbReference>
<dbReference type="GO" id="GO:0016055">
    <property type="term" value="P:Wnt signaling pathway"/>
    <property type="evidence" value="ECO:0007669"/>
    <property type="project" value="UniProtKB-KW"/>
</dbReference>
<dbReference type="CDD" id="cd03071">
    <property type="entry name" value="PDI_b'_NRX"/>
    <property type="match status" value="1"/>
</dbReference>
<dbReference type="CDD" id="cd03009">
    <property type="entry name" value="TryX_like_TryX_NRX"/>
    <property type="match status" value="1"/>
</dbReference>
<dbReference type="FunFam" id="3.40.30.10:FF:000062">
    <property type="entry name" value="Nucleoredoxin"/>
    <property type="match status" value="1"/>
</dbReference>
<dbReference type="FunFam" id="3.40.30.10:FF:000064">
    <property type="entry name" value="Nucleoredoxin"/>
    <property type="match status" value="1"/>
</dbReference>
<dbReference type="FunFam" id="3.40.30.10:FF:000210">
    <property type="entry name" value="nucleoredoxin"/>
    <property type="match status" value="1"/>
</dbReference>
<dbReference type="Gene3D" id="3.40.30.10">
    <property type="entry name" value="Glutaredoxin"/>
    <property type="match status" value="3"/>
</dbReference>
<dbReference type="InterPro" id="IPR041861">
    <property type="entry name" value="NRX_PDI_b"/>
</dbReference>
<dbReference type="InterPro" id="IPR012336">
    <property type="entry name" value="Thioredoxin-like_fold"/>
</dbReference>
<dbReference type="InterPro" id="IPR036249">
    <property type="entry name" value="Thioredoxin-like_sf"/>
</dbReference>
<dbReference type="InterPro" id="IPR013766">
    <property type="entry name" value="Thioredoxin_domain"/>
</dbReference>
<dbReference type="InterPro" id="IPR045870">
    <property type="entry name" value="TryX_NRX_thioredoxin_dom"/>
</dbReference>
<dbReference type="PANTHER" id="PTHR46472">
    <property type="entry name" value="NUCLEOREDOXIN"/>
    <property type="match status" value="1"/>
</dbReference>
<dbReference type="PANTHER" id="PTHR46472:SF1">
    <property type="entry name" value="NUCLEOREDOXIN"/>
    <property type="match status" value="1"/>
</dbReference>
<dbReference type="Pfam" id="PF13848">
    <property type="entry name" value="Thioredoxin_6"/>
    <property type="match status" value="1"/>
</dbReference>
<dbReference type="Pfam" id="PF13905">
    <property type="entry name" value="Thioredoxin_8"/>
    <property type="match status" value="2"/>
</dbReference>
<dbReference type="SUPFAM" id="SSF52833">
    <property type="entry name" value="Thioredoxin-like"/>
    <property type="match status" value="3"/>
</dbReference>
<dbReference type="PROSITE" id="PS51352">
    <property type="entry name" value="THIOREDOXIN_2"/>
    <property type="match status" value="1"/>
</dbReference>
<keyword id="KW-0007">Acetylation</keyword>
<keyword id="KW-0963">Cytoplasm</keyword>
<keyword id="KW-0217">Developmental protein</keyword>
<keyword id="KW-0221">Differentiation</keyword>
<keyword id="KW-0520">NAD</keyword>
<keyword id="KW-0539">Nucleus</keyword>
<keyword id="KW-0560">Oxidoreductase</keyword>
<keyword id="KW-1185">Reference proteome</keyword>
<keyword id="KW-0879">Wnt signaling pathway</keyword>
<feature type="initiator methionine" description="Removed" evidence="3">
    <location>
        <position position="1"/>
    </location>
</feature>
<feature type="chain" id="PRO_0000332932" description="Nucleoredoxin">
    <location>
        <begin position="2"/>
        <end position="435"/>
    </location>
</feature>
<feature type="domain" description="Thioredoxin" evidence="4">
    <location>
        <begin position="167"/>
        <end position="321"/>
    </location>
</feature>
<feature type="modified residue" description="N-acetylserine" evidence="3">
    <location>
        <position position="2"/>
    </location>
</feature>
<proteinExistence type="evidence at transcript level"/>
<comment type="function">
    <text evidence="1">Functions as a redox-dependent negative regulator of the Wnt signaling pathway, possibly by preventing ubiquitination of DVL3 by the BCR(KLHL12) complex. May also function as a transcriptional regulator act as a regulator of protein phosphatase 2A (PP2A) (By similarity).</text>
</comment>
<comment type="catalytic activity">
    <reaction>
        <text>[protein]-dithiol + NAD(+) = [protein]-disulfide + NADH + H(+)</text>
        <dbReference type="Rhea" id="RHEA:18749"/>
        <dbReference type="Rhea" id="RHEA-COMP:10593"/>
        <dbReference type="Rhea" id="RHEA-COMP:10594"/>
        <dbReference type="ChEBI" id="CHEBI:15378"/>
        <dbReference type="ChEBI" id="CHEBI:29950"/>
        <dbReference type="ChEBI" id="CHEBI:50058"/>
        <dbReference type="ChEBI" id="CHEBI:57540"/>
        <dbReference type="ChEBI" id="CHEBI:57945"/>
        <dbReference type="EC" id="1.8.1.8"/>
    </reaction>
</comment>
<comment type="catalytic activity">
    <reaction>
        <text>[protein]-dithiol + NADP(+) = [protein]-disulfide + NADPH + H(+)</text>
        <dbReference type="Rhea" id="RHEA:18753"/>
        <dbReference type="Rhea" id="RHEA-COMP:10593"/>
        <dbReference type="Rhea" id="RHEA-COMP:10594"/>
        <dbReference type="ChEBI" id="CHEBI:15378"/>
        <dbReference type="ChEBI" id="CHEBI:29950"/>
        <dbReference type="ChEBI" id="CHEBI:50058"/>
        <dbReference type="ChEBI" id="CHEBI:57783"/>
        <dbReference type="ChEBI" id="CHEBI:58349"/>
        <dbReference type="EC" id="1.8.1.8"/>
    </reaction>
</comment>
<comment type="subunit">
    <text evidence="1">Associates with the phosphatase 2A holoenzyme. Interacts with PPP2CA; the interaction is direct. Interacts with DVL1 (via PDZ domain); the interaction is direct and regulated by oxidative stress (By similarity).</text>
</comment>
<comment type="subcellular location">
    <subcellularLocation>
        <location evidence="2">Cytoplasm</location>
        <location evidence="2">Cytosol</location>
    </subcellularLocation>
    <subcellularLocation>
        <location evidence="2">Nucleus</location>
    </subcellularLocation>
</comment>
<comment type="similarity">
    <text evidence="5">Belongs to the nucleoredoxin family.</text>
</comment>
<sequence>MSGFLEELLGEKLVTGGGEEVDVHSLAARGISLLGLYFGCSLSAPCAQLSASLAAFYGRLRGDAAAGPGPGPGAGASAEPEPRRRLEIVFVSSDQDQRQWQDFVRDMPWLALPYKEKHRKLKLWNKYRISNIPSLIFLDATSGKVVCRNGLLVIRDDPEGLEFPWGPKPFREVIAGPLLRSNGQSLESSSLEGSHVGVYFSAHWCPPCRSLTRVLVESYRKIKEAGQKFEIIFVSADRSEDSFKQYFSEMPWLAVPYTDEARRSRLNRLYGIQGIPTLIVLDPQGEVITRQGRVEVLNDEDCRGFPWHPKPVLELSDSNAVQLNEGPCLVLFVDSEDDGESEAAKQLIQPIAEKIIAKYKAKEEEAPLLFFVAGEDDMTDSLRDYTNLPEAAPLLTILDMSARAKYVMDVEEITPAIVEAFVNDFLAEKLKPEPI</sequence>